<proteinExistence type="inferred from homology"/>
<sequence>MSSPAPSTSHNAANSTQAFSLKTRRPIDEDDLLTAEDREAKSTVEKLDCATRRRACKNCTCGRAELERQLEAGGSQVMGAMPPGGCGNCAKGDAFRCAGCPYLGMPAFDNAVDGKVKLDLTDDI</sequence>
<dbReference type="EMBL" id="FN554971">
    <property type="protein sequence ID" value="CBH13187.1"/>
    <property type="molecule type" value="Genomic_DNA"/>
</dbReference>
<dbReference type="RefSeq" id="XP_011775464.1">
    <property type="nucleotide sequence ID" value="XM_011777162.1"/>
</dbReference>
<dbReference type="GeneID" id="23863297"/>
<dbReference type="KEGG" id="tbg:TbgDal_VIII1370"/>
<dbReference type="VEuPathDB" id="TriTrypDB:Tbg972.8.1370"/>
<dbReference type="OrthoDB" id="756at5690"/>
<dbReference type="Proteomes" id="UP000002316">
    <property type="component" value="Chromosome 8"/>
</dbReference>
<dbReference type="GO" id="GO:0005758">
    <property type="term" value="C:mitochondrial intermembrane space"/>
    <property type="evidence" value="ECO:0007669"/>
    <property type="project" value="UniProtKB-SubCell"/>
</dbReference>
<dbReference type="GO" id="GO:0051537">
    <property type="term" value="F:2 iron, 2 sulfur cluster binding"/>
    <property type="evidence" value="ECO:0007669"/>
    <property type="project" value="UniProtKB-KW"/>
</dbReference>
<dbReference type="GO" id="GO:0051539">
    <property type="term" value="F:4 iron, 4 sulfur cluster binding"/>
    <property type="evidence" value="ECO:0007669"/>
    <property type="project" value="UniProtKB-KW"/>
</dbReference>
<dbReference type="GO" id="GO:0046872">
    <property type="term" value="F:metal ion binding"/>
    <property type="evidence" value="ECO:0007669"/>
    <property type="project" value="UniProtKB-KW"/>
</dbReference>
<dbReference type="GO" id="GO:0016226">
    <property type="term" value="P:iron-sulfur cluster assembly"/>
    <property type="evidence" value="ECO:0007669"/>
    <property type="project" value="InterPro"/>
</dbReference>
<dbReference type="InterPro" id="IPR007785">
    <property type="entry name" value="Anamorsin"/>
</dbReference>
<dbReference type="InterPro" id="IPR046408">
    <property type="entry name" value="CIAPIN1"/>
</dbReference>
<dbReference type="PANTHER" id="PTHR13273">
    <property type="entry name" value="ANAMORSIN"/>
    <property type="match status" value="1"/>
</dbReference>
<dbReference type="PANTHER" id="PTHR13273:SF14">
    <property type="entry name" value="ANAMORSIN"/>
    <property type="match status" value="1"/>
</dbReference>
<dbReference type="Pfam" id="PF05093">
    <property type="entry name" value="CIAPIN1"/>
    <property type="match status" value="1"/>
</dbReference>
<reference key="1">
    <citation type="journal article" date="2010" name="PLoS Negl. Trop. Dis.">
        <title>The genome sequence of Trypanosoma brucei gambiense, causative agent of chronic human african trypanosomiasis.</title>
        <authorList>
            <person name="Jackson A.P."/>
            <person name="Sanders M."/>
            <person name="Berry A."/>
            <person name="McQuillan J."/>
            <person name="Aslett M.A."/>
            <person name="Quail M.A."/>
            <person name="Chukualim B."/>
            <person name="Capewell P."/>
            <person name="MacLeod A."/>
            <person name="Melville S.E."/>
            <person name="Gibson W."/>
            <person name="Barry J.D."/>
            <person name="Berriman M."/>
            <person name="Hertz-Fowler C."/>
        </authorList>
    </citation>
    <scope>NUCLEOTIDE SEQUENCE [LARGE SCALE GENOMIC DNA]</scope>
    <source>
        <strain>MHOM/CI/86/DAL972</strain>
    </source>
</reference>
<organism>
    <name type="scientific">Trypanosoma brucei gambiense (strain MHOM/CI/86/DAL972)</name>
    <dbReference type="NCBI Taxonomy" id="679716"/>
    <lineage>
        <taxon>Eukaryota</taxon>
        <taxon>Discoba</taxon>
        <taxon>Euglenozoa</taxon>
        <taxon>Kinetoplastea</taxon>
        <taxon>Metakinetoplastina</taxon>
        <taxon>Trypanosomatida</taxon>
        <taxon>Trypanosomatidae</taxon>
        <taxon>Trypanosoma</taxon>
    </lineage>
</organism>
<comment type="function">
    <text evidence="1">Component of the cytosolic iron-sulfur (Fe-S) protein assembly (CIA) machinery. Required for the maturation of extramitochondrial Fe-S proteins. Part of an electron transfer chain functioning in an early step of cytosolic Fe-S biogenesis, facilitating the de novo assembly of a [4Fe-4S] cluster on the cytosolic Fe-S scaffold complex. Electrons are transferred from NADPH via a FAD- and FMN-containing diflavin oxidoreductase. Together with the diflavin oxidoreductase, also required for the assembly of the diferric tyrosyl radical cofactor of ribonucleotide reductase (RNR), probably by providing electrons for reduction during radical cofactor maturation in the catalytic small subunit.</text>
</comment>
<comment type="cofactor">
    <cofactor evidence="1">
        <name>[2Fe-2S] cluster</name>
        <dbReference type="ChEBI" id="CHEBI:190135"/>
    </cofactor>
</comment>
<comment type="cofactor">
    <cofactor evidence="1">
        <name>[4Fe-4S] cluster</name>
        <dbReference type="ChEBI" id="CHEBI:49883"/>
    </cofactor>
</comment>
<comment type="subunit">
    <text evidence="2">Monomer.</text>
</comment>
<comment type="subcellular location">
    <subcellularLocation>
        <location evidence="1">Cytoplasm</location>
    </subcellularLocation>
    <subcellularLocation>
        <location evidence="1">Mitochondrion intermembrane space</location>
    </subcellularLocation>
</comment>
<comment type="domain">
    <text evidence="1">The C-terminal domain binds 2 Fe-S clusters but is otherwise mostly in an intrinsically disordered conformation.</text>
</comment>
<comment type="domain">
    <text evidence="1">The twin Cx2C motifs are involved in the recognition by the mitochondrial MIA40-ERV1 disulfide relay system. The formation of 2 disulfide bonds in the Cx2C motifs through dithiol/disulfide exchange reactions effectively traps the protein in the mitochondrial intermembrane space.</text>
</comment>
<comment type="similarity">
    <text evidence="4">Belongs to the anamorsin family.</text>
</comment>
<evidence type="ECO:0000250" key="1">
    <source>
        <dbReference type="UniProtKB" id="P36152"/>
    </source>
</evidence>
<evidence type="ECO:0000250" key="2">
    <source>
        <dbReference type="UniProtKB" id="Q6FI81"/>
    </source>
</evidence>
<evidence type="ECO:0000256" key="3">
    <source>
        <dbReference type="SAM" id="MobiDB-lite"/>
    </source>
</evidence>
<evidence type="ECO:0000305" key="4"/>
<gene>
    <name type="ORF">TbgDal_VIII1370</name>
</gene>
<feature type="chain" id="PRO_0000392367" description="Anamorsin homolog">
    <location>
        <begin position="1"/>
        <end position="124"/>
    </location>
</feature>
<feature type="region of interest" description="Disordered" evidence="3">
    <location>
        <begin position="1"/>
        <end position="39"/>
    </location>
</feature>
<feature type="region of interest" description="Disordered" evidence="1">
    <location>
        <begin position="40"/>
        <end position="124"/>
    </location>
</feature>
<feature type="region of interest" description="Fe-S binding site A" evidence="1">
    <location>
        <begin position="49"/>
        <end position="61"/>
    </location>
</feature>
<feature type="region of interest" description="Fe-S binding site B" evidence="1">
    <location>
        <begin position="86"/>
        <end position="100"/>
    </location>
</feature>
<feature type="short sequence motif" description="Cx2C motif 1" evidence="1">
    <location>
        <begin position="86"/>
        <end position="89"/>
    </location>
</feature>
<feature type="short sequence motif" description="Cx2C motif 2" evidence="1">
    <location>
        <begin position="97"/>
        <end position="100"/>
    </location>
</feature>
<feature type="compositionally biased region" description="Polar residues" evidence="3">
    <location>
        <begin position="1"/>
        <end position="20"/>
    </location>
</feature>
<feature type="binding site" evidence="1">
    <location>
        <position position="49"/>
    </location>
    <ligand>
        <name>[2Fe-2S] cluster</name>
        <dbReference type="ChEBI" id="CHEBI:190135"/>
    </ligand>
</feature>
<feature type="binding site" evidence="1">
    <location>
        <position position="56"/>
    </location>
    <ligand>
        <name>[2Fe-2S] cluster</name>
        <dbReference type="ChEBI" id="CHEBI:190135"/>
    </ligand>
</feature>
<feature type="binding site" evidence="1">
    <location>
        <position position="59"/>
    </location>
    <ligand>
        <name>[2Fe-2S] cluster</name>
        <dbReference type="ChEBI" id="CHEBI:190135"/>
    </ligand>
</feature>
<feature type="binding site" evidence="1">
    <location>
        <position position="61"/>
    </location>
    <ligand>
        <name>[2Fe-2S] cluster</name>
        <dbReference type="ChEBI" id="CHEBI:190135"/>
    </ligand>
</feature>
<feature type="binding site" evidence="1">
    <location>
        <position position="86"/>
    </location>
    <ligand>
        <name>[4Fe-4S] cluster</name>
        <dbReference type="ChEBI" id="CHEBI:49883"/>
    </ligand>
</feature>
<feature type="binding site" evidence="1">
    <location>
        <position position="89"/>
    </location>
    <ligand>
        <name>[4Fe-4S] cluster</name>
        <dbReference type="ChEBI" id="CHEBI:49883"/>
    </ligand>
</feature>
<feature type="binding site" evidence="1">
    <location>
        <position position="97"/>
    </location>
    <ligand>
        <name>[4Fe-4S] cluster</name>
        <dbReference type="ChEBI" id="CHEBI:49883"/>
    </ligand>
</feature>
<feature type="binding site" evidence="1">
    <location>
        <position position="100"/>
    </location>
    <ligand>
        <name>[4Fe-4S] cluster</name>
        <dbReference type="ChEBI" id="CHEBI:49883"/>
    </ligand>
</feature>
<keyword id="KW-0001">2Fe-2S</keyword>
<keyword id="KW-0004">4Fe-4S</keyword>
<keyword id="KW-0963">Cytoplasm</keyword>
<keyword id="KW-0408">Iron</keyword>
<keyword id="KW-0411">Iron-sulfur</keyword>
<keyword id="KW-0479">Metal-binding</keyword>
<keyword id="KW-0496">Mitochondrion</keyword>
<accession>C9ZUU9</accession>
<protein>
    <recommendedName>
        <fullName>Anamorsin homolog</fullName>
    </recommendedName>
    <alternativeName>
        <fullName>Fe-S cluster assembly protein DRE2 homolog</fullName>
    </alternativeName>
</protein>
<name>DRE2_TRYB9</name>